<keyword id="KW-1185">Reference proteome</keyword>
<dbReference type="EMBL" id="AF022214">
    <property type="protein sequence ID" value="AAC18516.1"/>
    <property type="molecule type" value="Genomic_DNA"/>
</dbReference>
<dbReference type="PIR" id="B72809">
    <property type="entry name" value="B72809"/>
</dbReference>
<dbReference type="RefSeq" id="NP_046892.1">
    <property type="nucleotide sequence ID" value="NC_001900.1"/>
</dbReference>
<dbReference type="SMR" id="O64267"/>
<dbReference type="GeneID" id="1261580"/>
<dbReference type="KEGG" id="vg:1261580"/>
<dbReference type="OrthoDB" id="17785at10239"/>
<dbReference type="Proteomes" id="UP000002131">
    <property type="component" value="Segment"/>
</dbReference>
<organism>
    <name type="scientific">Mycobacterium phage D29</name>
    <name type="common">Mycobacteriophage D29</name>
    <dbReference type="NCBI Taxonomy" id="28369"/>
    <lineage>
        <taxon>Viruses</taxon>
        <taxon>Duplodnaviria</taxon>
        <taxon>Heunggongvirae</taxon>
        <taxon>Uroviricota</taxon>
        <taxon>Caudoviricetes</taxon>
        <taxon>Fromanvirus</taxon>
    </lineage>
</organism>
<sequence length="88" mass="10064">MANNYRYVEAVRDAEGFIIDGDYAAWDCSRCGHEAQRYRGQSDVDCRNCGACYNASGQRLRDDWRGNPSAWDDEVGDLEGFELQHSDY</sequence>
<reference key="1">
    <citation type="journal article" date="1998" name="J. Mol. Biol.">
        <title>Genome structure of mycobacteriophage D29: implications for phage evolution.</title>
        <authorList>
            <person name="Ford M.E."/>
            <person name="Sarkis G.J."/>
            <person name="Belanger A.E."/>
            <person name="Hendrix R.W."/>
            <person name="Hatfull G.F."/>
        </authorList>
    </citation>
    <scope>NUCLEOTIDE SEQUENCE [LARGE SCALE GENOMIC DNA]</scope>
</reference>
<organismHost>
    <name type="scientific">Mycobacterium</name>
    <dbReference type="NCBI Taxonomy" id="1763"/>
</organismHost>
<name>VG86_BPMD2</name>
<feature type="chain" id="PRO_0000164830" description="Gene 86 protein">
    <location>
        <begin position="1"/>
        <end position="88"/>
    </location>
</feature>
<protein>
    <recommendedName>
        <fullName>Gene 86 protein</fullName>
    </recommendedName>
    <alternativeName>
        <fullName>Gp86</fullName>
    </alternativeName>
</protein>
<accession>O64267</accession>
<proteinExistence type="predicted"/>
<gene>
    <name type="primary">86</name>
</gene>